<protein>
    <recommendedName>
        <fullName>Protein Ac132</fullName>
    </recommendedName>
</protein>
<accession>P24730</accession>
<feature type="chain" id="PRO_0000133064" description="Protein Ac132">
    <location>
        <begin position="1"/>
        <end position="219"/>
    </location>
</feature>
<feature type="region of interest" description="Disordered" evidence="1">
    <location>
        <begin position="1"/>
        <end position="34"/>
    </location>
</feature>
<feature type="region of interest" description="NEBU-like domain" evidence="4">
    <location>
        <begin position="103"/>
        <end position="134"/>
    </location>
</feature>
<feature type="compositionally biased region" description="Basic and acidic residues" evidence="1">
    <location>
        <begin position="16"/>
        <end position="33"/>
    </location>
</feature>
<name>AC132_NPVAC</name>
<sequence>MSDKTPTKKGGSHAMTLRERGVTKPPKKSEKLQQYKKAIAAEQTLRTTADVSSLQNPGESAVFQELERLENAVVVLENEQKRLYPILDTPLDNFIVAFVNPTYPMAYFVNTDYKLKLECARIRSDLLYKNKNEVAINRPKISSFKLQLNNVILDTIETIEYDLQNKVLTITAPVQDQELRKSIIYFNILNSDSWEVPKYMKKLFDEMQLEPPVILPLGL</sequence>
<evidence type="ECO:0000256" key="1">
    <source>
        <dbReference type="SAM" id="MobiDB-lite"/>
    </source>
</evidence>
<evidence type="ECO:0000269" key="2">
    <source>
    </source>
</evidence>
<evidence type="ECO:0000269" key="3">
    <source>
    </source>
</evidence>
<evidence type="ECO:0000269" key="4">
    <source>
    </source>
</evidence>
<organism>
    <name type="scientific">Autographa californica nuclear polyhedrosis virus</name>
    <name type="common">AcMNPV</name>
    <dbReference type="NCBI Taxonomy" id="46015"/>
    <lineage>
        <taxon>Viruses</taxon>
        <taxon>Viruses incertae sedis</taxon>
        <taxon>Naldaviricetes</taxon>
        <taxon>Lefavirales</taxon>
        <taxon>Baculoviridae</taxon>
        <taxon>Alphabaculovirus</taxon>
        <taxon>Alphabaculovirus aucalifornicae</taxon>
    </lineage>
</organism>
<organismHost>
    <name type="scientific">Lepidoptera</name>
    <name type="common">butterflies and moths</name>
    <dbReference type="NCBI Taxonomy" id="7088"/>
</organismHost>
<comment type="function">
    <text evidence="3 4">Plays an essential role in nucleocapsid entry in host nucleus. May act by binding and stabilizing F-actin in the infected cell, which might attach to nucleocapsids and then push the nucleocapsids into the nucleus.</text>
</comment>
<comment type="subunit">
    <text evidence="3">Interacts with viral envelope protein E18 and the DNA-binding protein p6.9.</text>
</comment>
<comment type="subcellular location">
    <subcellularLocation>
        <location evidence="3">Host cytoplasm</location>
    </subcellularLocation>
    <subcellularLocation>
        <location evidence="3">Host nucleus</location>
    </subcellularLocation>
    <subcellularLocation>
        <location evidence="2 3">Virion</location>
    </subcellularLocation>
    <text evidence="3">Present in both the budded virus (BV) and the occluded virus (OV). The occluded form allows the virus to be transmitted from insect to insect through ingestion of contaminated food while the budded form is responsible for the dissemination of infection throughout the insect host.</text>
</comment>
<comment type="domain">
    <text evidence="4">Contains a domain homologous to an NEBU domain that is known to bind actin.</text>
</comment>
<reference key="1">
    <citation type="journal article" date="1987" name="J. Virol.">
        <title>Overlapping sets of viral RNAs reflect the array of polypeptides in the EcoRI J and N fragments (map positions 81.2 to 85.0) of the Autographa californica nuclear polyhedrosis virus genome.</title>
        <authorList>
            <person name="Oellig C."/>
            <person name="Happ B."/>
            <person name="Mueller T."/>
            <person name="Doerfler W."/>
        </authorList>
    </citation>
    <scope>NUCLEOTIDE SEQUENCE [GENOMIC DNA]</scope>
</reference>
<reference key="2">
    <citation type="journal article" date="1994" name="Virology">
        <title>The complete DNA sequence of Autographa californica nuclear polyhedrosis virus.</title>
        <authorList>
            <person name="Ayres M.D."/>
            <person name="Howard S.C."/>
            <person name="Kuzio J."/>
            <person name="Lopez-Ferber M."/>
            <person name="Possee R.D."/>
        </authorList>
    </citation>
    <scope>NUCLEOTIDE SEQUENCE [LARGE SCALE GENOMIC DNA]</scope>
    <source>
        <strain>C6</strain>
    </source>
</reference>
<reference key="3">
    <citation type="journal article" date="2010" name="J. Virol.">
        <title>Proteomics of the Autographa californica nucleopolyhedrovirus budded virions.</title>
        <authorList>
            <person name="Wang R."/>
            <person name="Deng F."/>
            <person name="Hou D."/>
            <person name="Zhao Y."/>
            <person name="Guo L."/>
            <person name="Wang H."/>
            <person name="Hu Z."/>
        </authorList>
    </citation>
    <scope>SUBCELLULAR LOCATION</scope>
</reference>
<reference key="4">
    <citation type="journal article" date="2014" name="J. Virol.">
        <title>Autographa californica multiple nucleopolyhedrovirus orf132 encodes a nucleocapsid-associated protein required for budded-virus and multiply enveloped occlusion-derived virus production.</title>
        <authorList>
            <person name="Yang M."/>
            <person name="Wang S."/>
            <person name="Yue X.L."/>
            <person name="Li L.L."/>
        </authorList>
    </citation>
    <scope>FUNCTION</scope>
    <scope>SUBCELLULAR LOCATION</scope>
    <scope>INTERACTION WITH E18 AND P6.9</scope>
</reference>
<reference key="5">
    <citation type="journal article" date="2016" name="J. Gen. Virol.">
        <title>The Autographa californica multiple nucleopolyhedrovirus Ac132 plays a role in nuclear entry.</title>
        <authorList>
            <person name="Fang Z."/>
            <person name="Li C."/>
            <person name="Wu W."/>
            <person name="Yuan M."/>
            <person name="Yang K."/>
        </authorList>
    </citation>
    <scope>FUNCTION</scope>
    <scope>SUBCELLULAR LOCATION</scope>
    <scope>DOMAIN</scope>
</reference>
<keyword id="KW-1035">Host cytoplasm</keyword>
<keyword id="KW-1048">Host nucleus</keyword>
<keyword id="KW-0426">Late protein</keyword>
<keyword id="KW-1185">Reference proteome</keyword>
<keyword id="KW-0946">Virion</keyword>
<dbReference type="EMBL" id="M17548">
    <property type="protein sequence ID" value="AAA66806.1"/>
    <property type="molecule type" value="Genomic_DNA"/>
</dbReference>
<dbReference type="EMBL" id="L22858">
    <property type="protein sequence ID" value="AAA66762.1"/>
    <property type="molecule type" value="Genomic_DNA"/>
</dbReference>
<dbReference type="PIR" id="E72866">
    <property type="entry name" value="E72866"/>
</dbReference>
<dbReference type="KEGG" id="vg:1403965"/>
<dbReference type="OrthoDB" id="10911at10239"/>
<dbReference type="Proteomes" id="UP000008292">
    <property type="component" value="Segment"/>
</dbReference>
<dbReference type="GO" id="GO:0030430">
    <property type="term" value="C:host cell cytoplasm"/>
    <property type="evidence" value="ECO:0000314"/>
    <property type="project" value="UniProtKB"/>
</dbReference>
<dbReference type="GO" id="GO:0042025">
    <property type="term" value="C:host cell nucleus"/>
    <property type="evidence" value="ECO:0000314"/>
    <property type="project" value="UniProtKB"/>
</dbReference>
<dbReference type="GO" id="GO:0044423">
    <property type="term" value="C:virion component"/>
    <property type="evidence" value="ECO:0000314"/>
    <property type="project" value="UniProtKB"/>
</dbReference>
<proteinExistence type="evidence at protein level"/>
<gene>
    <name type="primary">Ac132</name>
    <name type="ORF">ORF132</name>
</gene>